<accession>B2HNT8</accession>
<keyword id="KW-0255">Endonuclease</keyword>
<keyword id="KW-0378">Hydrolase</keyword>
<keyword id="KW-0540">Nuclease</keyword>
<keyword id="KW-1185">Reference proteome</keyword>
<keyword id="KW-0694">RNA-binding</keyword>
<keyword id="KW-0819">tRNA processing</keyword>
<dbReference type="EC" id="3.1.26.5" evidence="1"/>
<dbReference type="EMBL" id="CP000854">
    <property type="protein sequence ID" value="ACC43893.1"/>
    <property type="molecule type" value="Genomic_DNA"/>
</dbReference>
<dbReference type="RefSeq" id="WP_011742529.1">
    <property type="nucleotide sequence ID" value="NC_010612.1"/>
</dbReference>
<dbReference type="SMR" id="B2HNT8"/>
<dbReference type="STRING" id="216594.MMAR_5569"/>
<dbReference type="KEGG" id="mmi:MMAR_5569"/>
<dbReference type="eggNOG" id="COG0594">
    <property type="taxonomic scope" value="Bacteria"/>
</dbReference>
<dbReference type="HOGENOM" id="CLU_117179_4_1_11"/>
<dbReference type="OrthoDB" id="196964at2"/>
<dbReference type="Proteomes" id="UP000001190">
    <property type="component" value="Chromosome"/>
</dbReference>
<dbReference type="GO" id="GO:0030677">
    <property type="term" value="C:ribonuclease P complex"/>
    <property type="evidence" value="ECO:0007669"/>
    <property type="project" value="TreeGrafter"/>
</dbReference>
<dbReference type="GO" id="GO:0042781">
    <property type="term" value="F:3'-tRNA processing endoribonuclease activity"/>
    <property type="evidence" value="ECO:0007669"/>
    <property type="project" value="TreeGrafter"/>
</dbReference>
<dbReference type="GO" id="GO:0004526">
    <property type="term" value="F:ribonuclease P activity"/>
    <property type="evidence" value="ECO:0007669"/>
    <property type="project" value="UniProtKB-UniRule"/>
</dbReference>
<dbReference type="GO" id="GO:0000049">
    <property type="term" value="F:tRNA binding"/>
    <property type="evidence" value="ECO:0007669"/>
    <property type="project" value="UniProtKB-UniRule"/>
</dbReference>
<dbReference type="GO" id="GO:0001682">
    <property type="term" value="P:tRNA 5'-leader removal"/>
    <property type="evidence" value="ECO:0007669"/>
    <property type="project" value="UniProtKB-UniRule"/>
</dbReference>
<dbReference type="Gene3D" id="3.30.230.10">
    <property type="match status" value="1"/>
</dbReference>
<dbReference type="HAMAP" id="MF_00227">
    <property type="entry name" value="RNase_P"/>
    <property type="match status" value="1"/>
</dbReference>
<dbReference type="InterPro" id="IPR020568">
    <property type="entry name" value="Ribosomal_Su5_D2-typ_SF"/>
</dbReference>
<dbReference type="InterPro" id="IPR014721">
    <property type="entry name" value="Ribsml_uS5_D2-typ_fold_subgr"/>
</dbReference>
<dbReference type="InterPro" id="IPR000100">
    <property type="entry name" value="RNase_P"/>
</dbReference>
<dbReference type="InterPro" id="IPR020539">
    <property type="entry name" value="RNase_P_CS"/>
</dbReference>
<dbReference type="NCBIfam" id="TIGR00188">
    <property type="entry name" value="rnpA"/>
    <property type="match status" value="1"/>
</dbReference>
<dbReference type="PANTHER" id="PTHR33992">
    <property type="entry name" value="RIBONUCLEASE P PROTEIN COMPONENT"/>
    <property type="match status" value="1"/>
</dbReference>
<dbReference type="PANTHER" id="PTHR33992:SF1">
    <property type="entry name" value="RIBONUCLEASE P PROTEIN COMPONENT"/>
    <property type="match status" value="1"/>
</dbReference>
<dbReference type="Pfam" id="PF00825">
    <property type="entry name" value="Ribonuclease_P"/>
    <property type="match status" value="1"/>
</dbReference>
<dbReference type="SUPFAM" id="SSF54211">
    <property type="entry name" value="Ribosomal protein S5 domain 2-like"/>
    <property type="match status" value="1"/>
</dbReference>
<dbReference type="PROSITE" id="PS00648">
    <property type="entry name" value="RIBONUCLEASE_P"/>
    <property type="match status" value="1"/>
</dbReference>
<organism>
    <name type="scientific">Mycobacterium marinum (strain ATCC BAA-535 / M)</name>
    <dbReference type="NCBI Taxonomy" id="216594"/>
    <lineage>
        <taxon>Bacteria</taxon>
        <taxon>Bacillati</taxon>
        <taxon>Actinomycetota</taxon>
        <taxon>Actinomycetes</taxon>
        <taxon>Mycobacteriales</taxon>
        <taxon>Mycobacteriaceae</taxon>
        <taxon>Mycobacterium</taxon>
        <taxon>Mycobacterium ulcerans group</taxon>
    </lineage>
</organism>
<comment type="function">
    <text evidence="1">RNaseP catalyzes the removal of the 5'-leader sequence from pre-tRNA to produce the mature 5'-terminus. It can also cleave other RNA substrates such as 4.5S RNA. The protein component plays an auxiliary but essential role in vivo by binding to the 5'-leader sequence and broadening the substrate specificity of the ribozyme.</text>
</comment>
<comment type="catalytic activity">
    <reaction evidence="1">
        <text>Endonucleolytic cleavage of RNA, removing 5'-extranucleotides from tRNA precursor.</text>
        <dbReference type="EC" id="3.1.26.5"/>
    </reaction>
</comment>
<comment type="subunit">
    <text evidence="1">Consists of a catalytic RNA component (M1 or rnpB) and a protein subunit.</text>
</comment>
<comment type="similarity">
    <text evidence="1">Belongs to the RnpA family.</text>
</comment>
<name>RNPA_MYCMM</name>
<protein>
    <recommendedName>
        <fullName evidence="1">Ribonuclease P protein component</fullName>
        <shortName evidence="1">RNase P protein</shortName>
        <shortName evidence="1">RNaseP protein</shortName>
        <ecNumber evidence="1">3.1.26.5</ecNumber>
    </recommendedName>
    <alternativeName>
        <fullName evidence="1">Protein C5</fullName>
    </alternativeName>
</protein>
<gene>
    <name evidence="1" type="primary">rnpA</name>
    <name type="ordered locus">MMAR_5569</name>
</gene>
<proteinExistence type="inferred from homology"/>
<reference key="1">
    <citation type="journal article" date="2008" name="Genome Res.">
        <title>Insights from the complete genome sequence of Mycobacterium marinum on the evolution of Mycobacterium tuberculosis.</title>
        <authorList>
            <person name="Stinear T.P."/>
            <person name="Seemann T."/>
            <person name="Harrison P.F."/>
            <person name="Jenkin G.A."/>
            <person name="Davies J.K."/>
            <person name="Johnson P.D."/>
            <person name="Abdellah Z."/>
            <person name="Arrowsmith C."/>
            <person name="Chillingworth T."/>
            <person name="Churcher C."/>
            <person name="Clarke K."/>
            <person name="Cronin A."/>
            <person name="Davis P."/>
            <person name="Goodhead I."/>
            <person name="Holroyd N."/>
            <person name="Jagels K."/>
            <person name="Lord A."/>
            <person name="Moule S."/>
            <person name="Mungall K."/>
            <person name="Norbertczak H."/>
            <person name="Quail M.A."/>
            <person name="Rabbinowitsch E."/>
            <person name="Walker D."/>
            <person name="White B."/>
            <person name="Whitehead S."/>
            <person name="Small P.L."/>
            <person name="Brosch R."/>
            <person name="Ramakrishnan L."/>
            <person name="Fischbach M.A."/>
            <person name="Parkhill J."/>
            <person name="Cole S.T."/>
        </authorList>
    </citation>
    <scope>NUCLEOTIDE SEQUENCE [LARGE SCALE GENOMIC DNA]</scope>
    <source>
        <strain>ATCC BAA-535 / M</strain>
    </source>
</reference>
<feature type="chain" id="PRO_1000100374" description="Ribonuclease P protein component">
    <location>
        <begin position="1"/>
        <end position="120"/>
    </location>
</feature>
<evidence type="ECO:0000255" key="1">
    <source>
        <dbReference type="HAMAP-Rule" id="MF_00227"/>
    </source>
</evidence>
<sequence length="120" mass="13557">MLSARNRMRRSTEFDATVRQGVRTVQPDVIVHVRRAKECAADSSPRVGLIIAKSVGTAVERHRVARRLRHVARPMLMNLHPCDRVVIRALPSSRHVSSAWLEQQLRSGLRRAFESAGADR</sequence>